<reference key="1">
    <citation type="journal article" date="1995" name="Plant Mol. Biol. Rep.">
        <title>Complete nucleotide sequence of the Porphyra purpurea chloroplast genome.</title>
        <authorList>
            <person name="Reith M.E."/>
            <person name="Munholland J."/>
        </authorList>
    </citation>
    <scope>NUCLEOTIDE SEQUENCE [LARGE SCALE GENOMIC DNA]</scope>
    <source>
        <strain>Avonport</strain>
    </source>
</reference>
<keyword id="KW-0003">3Fe-4S</keyword>
<keyword id="KW-0004">4Fe-4S</keyword>
<keyword id="KW-0150">Chloroplast</keyword>
<keyword id="KW-0249">Electron transport</keyword>
<keyword id="KW-0408">Iron</keyword>
<keyword id="KW-0411">Iron-sulfur</keyword>
<keyword id="KW-0479">Metal-binding</keyword>
<keyword id="KW-0934">Plastid</keyword>
<keyword id="KW-0677">Repeat</keyword>
<keyword id="KW-0813">Transport</keyword>
<dbReference type="EMBL" id="U38804">
    <property type="protein sequence ID" value="AAC08222.1"/>
    <property type="molecule type" value="Genomic_DNA"/>
</dbReference>
<dbReference type="PIR" id="S73257">
    <property type="entry name" value="S73257"/>
</dbReference>
<dbReference type="RefSeq" id="NP_053946.1">
    <property type="nucleotide sequence ID" value="NC_000925.1"/>
</dbReference>
<dbReference type="SMR" id="P51336"/>
<dbReference type="GeneID" id="809971"/>
<dbReference type="GO" id="GO:0009507">
    <property type="term" value="C:chloroplast"/>
    <property type="evidence" value="ECO:0007669"/>
    <property type="project" value="UniProtKB-SubCell"/>
</dbReference>
<dbReference type="GO" id="GO:0051538">
    <property type="term" value="F:3 iron, 4 sulfur cluster binding"/>
    <property type="evidence" value="ECO:0007669"/>
    <property type="project" value="UniProtKB-KW"/>
</dbReference>
<dbReference type="GO" id="GO:0051539">
    <property type="term" value="F:4 iron, 4 sulfur cluster binding"/>
    <property type="evidence" value="ECO:0007669"/>
    <property type="project" value="UniProtKB-KW"/>
</dbReference>
<dbReference type="GO" id="GO:0046872">
    <property type="term" value="F:metal ion binding"/>
    <property type="evidence" value="ECO:0007669"/>
    <property type="project" value="UniProtKB-KW"/>
</dbReference>
<dbReference type="Gene3D" id="3.30.70.20">
    <property type="match status" value="1"/>
</dbReference>
<dbReference type="InterPro" id="IPR017896">
    <property type="entry name" value="4Fe4S_Fe-S-bd"/>
</dbReference>
<dbReference type="InterPro" id="IPR017900">
    <property type="entry name" value="4Fe4S_Fe_S_CS"/>
</dbReference>
<dbReference type="Pfam" id="PF12838">
    <property type="entry name" value="Fer4_7"/>
    <property type="match status" value="1"/>
</dbReference>
<dbReference type="SUPFAM" id="SSF54862">
    <property type="entry name" value="4Fe-4S ferredoxins"/>
    <property type="match status" value="1"/>
</dbReference>
<dbReference type="PROSITE" id="PS00198">
    <property type="entry name" value="4FE4S_FER_1"/>
    <property type="match status" value="1"/>
</dbReference>
<dbReference type="PROSITE" id="PS51379">
    <property type="entry name" value="4FE4S_FER_2"/>
    <property type="match status" value="2"/>
</dbReference>
<evidence type="ECO:0000250" key="1"/>
<evidence type="ECO:0000255" key="2">
    <source>
        <dbReference type="PROSITE-ProRule" id="PRU00711"/>
    </source>
</evidence>
<protein>
    <recommendedName>
        <fullName>Uncharacterized protein in rpl9-rpl11 intergenic region</fullName>
    </recommendedName>
    <alternativeName>
        <fullName>ORF75</fullName>
    </alternativeName>
</protein>
<name>YCXI_PORPU</name>
<feature type="chain" id="PRO_0000159220" description="Uncharacterized protein in rpl9-rpl11 intergenic region">
    <location>
        <begin position="1"/>
        <end position="75"/>
    </location>
</feature>
<feature type="domain" description="4Fe-4S ferredoxin-type 1" evidence="2">
    <location>
        <begin position="2"/>
        <end position="30"/>
    </location>
</feature>
<feature type="domain" description="4Fe-4S ferredoxin-type 2" evidence="2">
    <location>
        <begin position="37"/>
        <end position="68"/>
    </location>
</feature>
<feature type="binding site" evidence="1">
    <location>
        <position position="10"/>
    </location>
    <ligand>
        <name>[3Fe-4S] cluster</name>
        <dbReference type="ChEBI" id="CHEBI:21137"/>
    </ligand>
</feature>
<feature type="binding site" evidence="1">
    <location>
        <position position="16"/>
    </location>
    <ligand>
        <name>[3Fe-4S] cluster</name>
        <dbReference type="ChEBI" id="CHEBI:21137"/>
    </ligand>
</feature>
<feature type="binding site" evidence="1">
    <location>
        <position position="20"/>
    </location>
    <ligand>
        <name>[4Fe-4S] cluster</name>
        <dbReference type="ChEBI" id="CHEBI:49883"/>
    </ligand>
</feature>
<feature type="binding site" evidence="1">
    <location>
        <position position="46"/>
    </location>
    <ligand>
        <name>[4Fe-4S] cluster</name>
        <dbReference type="ChEBI" id="CHEBI:49883"/>
    </ligand>
</feature>
<feature type="binding site" evidence="1">
    <location>
        <position position="49"/>
    </location>
    <ligand>
        <name>[4Fe-4S] cluster</name>
        <dbReference type="ChEBI" id="CHEBI:49883"/>
    </ligand>
</feature>
<feature type="binding site" evidence="1">
    <location>
        <position position="52"/>
    </location>
    <ligand>
        <name>[4Fe-4S] cluster</name>
        <dbReference type="ChEBI" id="CHEBI:49883"/>
    </ligand>
</feature>
<feature type="binding site" evidence="1">
    <location>
        <position position="56"/>
    </location>
    <ligand>
        <name>[3Fe-4S] cluster</name>
        <dbReference type="ChEBI" id="CHEBI:21137"/>
    </ligand>
</feature>
<proteinExistence type="inferred from homology"/>
<accession>P51336</accession>
<organism>
    <name type="scientific">Porphyra purpurea</name>
    <name type="common">Red seaweed</name>
    <name type="synonym">Ulva purpurea</name>
    <dbReference type="NCBI Taxonomy" id="2787"/>
    <lineage>
        <taxon>Eukaryota</taxon>
        <taxon>Rhodophyta</taxon>
        <taxon>Bangiophyceae</taxon>
        <taxon>Bangiales</taxon>
        <taxon>Bangiaceae</taxon>
        <taxon>Porphyra</taxon>
    </lineage>
</organism>
<comment type="cofactor">
    <cofactor evidence="1">
        <name>[4Fe-4S] cluster</name>
        <dbReference type="ChEBI" id="CHEBI:49883"/>
    </cofactor>
    <text evidence="1">Binds 1 [4Fe-4S] cluster.</text>
</comment>
<comment type="cofactor">
    <cofactor evidence="1">
        <name>[3Fe-4S] cluster</name>
        <dbReference type="ChEBI" id="CHEBI:21137"/>
    </cofactor>
    <text evidence="1">Binds 1 [3Fe-4S] cluster.</text>
</comment>
<comment type="subcellular location">
    <subcellularLocation>
        <location>Plastid</location>
        <location>Chloroplast</location>
    </subcellularLocation>
</comment>
<sequence length="75" mass="8327">MSHTIVTEKCIGVAECVNACPVSCIHKGEGKNTINKDWYWIDFAACIDCSICIQVCPTKGAILDKEEPSLQRKLR</sequence>
<geneLocation type="chloroplast"/>